<reference key="1">
    <citation type="journal article" date="2003" name="Nucleic Acids Res.">
        <title>The complete nucleotide sequence of the hornwort (Anthoceros formosae) chloroplast genome: insight into the earliest land plants.</title>
        <authorList>
            <person name="Kugita M."/>
            <person name="Kaneko A."/>
            <person name="Yamamoto Y."/>
            <person name="Takeya Y."/>
            <person name="Matsumoto T."/>
            <person name="Yoshinaga K."/>
        </authorList>
    </citation>
    <scope>NUCLEOTIDE SEQUENCE [LARGE SCALE GENOMIC DNA]</scope>
    <scope>RNA EDITING</scope>
</reference>
<reference key="2">
    <citation type="journal article" date="2003" name="Nucleic Acids Res.">
        <title>RNA editing in hornwort chloroplasts makes more than half the genes functional.</title>
        <authorList>
            <person name="Kugita M."/>
            <person name="Yamamoto Y."/>
            <person name="Fujikawa T."/>
            <person name="Matsumoto T."/>
            <person name="Yoshinaga K."/>
        </authorList>
    </citation>
    <scope>NUCLEOTIDE SEQUENCE [MRNA]</scope>
    <scope>RNA EDITING</scope>
    <source>
        <tissue>Thallus</tissue>
    </source>
</reference>
<feature type="chain" id="PRO_0000095917" description="Translation initiation factor IF-1, chloroplastic">
    <location>
        <begin position="1"/>
        <end position="78"/>
    </location>
</feature>
<feature type="domain" description="S1-like" evidence="1">
    <location>
        <begin position="1"/>
        <end position="72"/>
    </location>
</feature>
<organism>
    <name type="scientific">Anthoceros angustus</name>
    <name type="common">Hornwort</name>
    <name type="synonym">Anthoceros formosae</name>
    <dbReference type="NCBI Taxonomy" id="48387"/>
    <lineage>
        <taxon>Eukaryota</taxon>
        <taxon>Viridiplantae</taxon>
        <taxon>Streptophyta</taxon>
        <taxon>Embryophyta</taxon>
        <taxon>Anthocerotophyta</taxon>
        <taxon>Anthocerotopsida</taxon>
        <taxon>Anthocerotidae</taxon>
        <taxon>Anthocerotales</taxon>
        <taxon>Anthocerotaceae</taxon>
        <taxon>Anthoceros</taxon>
    </lineage>
</organism>
<accession>Q85C77</accession>
<name>IF1C_ANTAG</name>
<evidence type="ECO:0000255" key="1">
    <source>
        <dbReference type="HAMAP-Rule" id="MF_00075"/>
    </source>
</evidence>
<evidence type="ECO:0000269" key="2">
    <source>
    </source>
</evidence>
<evidence type="ECO:0000269" key="3">
    <source>
    </source>
</evidence>
<comment type="function">
    <text evidence="1">One of the essential components for the initiation of protein synthesis. Stabilizes the binding of IF-2 and IF-3 on the 30S subunit to which N-formylmethionyl-tRNA(fMet) subsequently binds. Helps modulate mRNA selection, yielding the 30S pre-initiation complex (PIC). Upon addition of the 50S ribosomal subunit IF-1, IF-2 and IF-3 are released leaving the mature 70S translation initiation complex.</text>
</comment>
<comment type="subunit">
    <text evidence="1">Component of the 30S ribosomal translation pre-initiation complex which assembles on the 30S ribosome in the order IF-2 and IF-3, IF-1 and N-formylmethionyl-tRNA(fMet); mRNA recruitment can occur at any time during PIC assembly.</text>
</comment>
<comment type="subcellular location">
    <subcellularLocation>
        <location evidence="1">Plastid</location>
        <location evidence="1">Chloroplast</location>
    </subcellularLocation>
</comment>
<comment type="RNA editing">
    <location>
        <position position="13" evidence="2 3"/>
    </location>
    <location>
        <position position="46" evidence="2 3"/>
    </location>
    <location>
        <position position="66" evidence="2 3"/>
    </location>
    <text>The nonsense codon at position 46 is modified to a sense codon.</text>
</comment>
<comment type="similarity">
    <text evidence="1">Belongs to the IF-1 family.</text>
</comment>
<geneLocation type="chloroplast"/>
<proteinExistence type="evidence at transcript level"/>
<protein>
    <recommendedName>
        <fullName evidence="1">Translation initiation factor IF-1, chloroplastic</fullName>
    </recommendedName>
</protein>
<sequence length="78" mass="8950">MEKQNLIDMEGVVTESLPNAMFRVCLDNGCQVLTHISGKIRRNYIRILPGDRVKVELSPYDLTKGRITYRLRTKSSNP</sequence>
<dbReference type="EMBL" id="AB086179">
    <property type="protein sequence ID" value="BAC55384.1"/>
    <property type="molecule type" value="Genomic_DNA"/>
</dbReference>
<dbReference type="EMBL" id="AB087468">
    <property type="protein sequence ID" value="BAC55481.1"/>
    <property type="molecule type" value="mRNA"/>
</dbReference>
<dbReference type="RefSeq" id="NP_777448.1">
    <property type="nucleotide sequence ID" value="NC_004543.1"/>
</dbReference>
<dbReference type="SMR" id="Q85C77"/>
<dbReference type="GeneID" id="2553492"/>
<dbReference type="GO" id="GO:0009507">
    <property type="term" value="C:chloroplast"/>
    <property type="evidence" value="ECO:0007669"/>
    <property type="project" value="UniProtKB-SubCell"/>
</dbReference>
<dbReference type="GO" id="GO:0005829">
    <property type="term" value="C:cytosol"/>
    <property type="evidence" value="ECO:0007669"/>
    <property type="project" value="TreeGrafter"/>
</dbReference>
<dbReference type="GO" id="GO:0043022">
    <property type="term" value="F:ribosome binding"/>
    <property type="evidence" value="ECO:0007669"/>
    <property type="project" value="UniProtKB-UniRule"/>
</dbReference>
<dbReference type="GO" id="GO:0019843">
    <property type="term" value="F:rRNA binding"/>
    <property type="evidence" value="ECO:0007669"/>
    <property type="project" value="UniProtKB-UniRule"/>
</dbReference>
<dbReference type="GO" id="GO:0003743">
    <property type="term" value="F:translation initiation factor activity"/>
    <property type="evidence" value="ECO:0007669"/>
    <property type="project" value="UniProtKB-UniRule"/>
</dbReference>
<dbReference type="CDD" id="cd04451">
    <property type="entry name" value="S1_IF1"/>
    <property type="match status" value="1"/>
</dbReference>
<dbReference type="FunFam" id="2.40.50.140:FF:000002">
    <property type="entry name" value="Translation initiation factor IF-1"/>
    <property type="match status" value="1"/>
</dbReference>
<dbReference type="Gene3D" id="2.40.50.140">
    <property type="entry name" value="Nucleic acid-binding proteins"/>
    <property type="match status" value="1"/>
</dbReference>
<dbReference type="HAMAP" id="MF_00075">
    <property type="entry name" value="IF_1"/>
    <property type="match status" value="1"/>
</dbReference>
<dbReference type="InterPro" id="IPR012340">
    <property type="entry name" value="NA-bd_OB-fold"/>
</dbReference>
<dbReference type="InterPro" id="IPR006196">
    <property type="entry name" value="RNA-binding_domain_S1_IF1"/>
</dbReference>
<dbReference type="InterPro" id="IPR003029">
    <property type="entry name" value="S1_domain"/>
</dbReference>
<dbReference type="InterPro" id="IPR004368">
    <property type="entry name" value="TIF_IF1"/>
</dbReference>
<dbReference type="NCBIfam" id="TIGR00008">
    <property type="entry name" value="infA"/>
    <property type="match status" value="1"/>
</dbReference>
<dbReference type="PANTHER" id="PTHR33370">
    <property type="entry name" value="TRANSLATION INITIATION FACTOR IF-1, CHLOROPLASTIC"/>
    <property type="match status" value="1"/>
</dbReference>
<dbReference type="PANTHER" id="PTHR33370:SF1">
    <property type="entry name" value="TRANSLATION INITIATION FACTOR IF-1, CHLOROPLASTIC"/>
    <property type="match status" value="1"/>
</dbReference>
<dbReference type="Pfam" id="PF01176">
    <property type="entry name" value="eIF-1a"/>
    <property type="match status" value="1"/>
</dbReference>
<dbReference type="SMART" id="SM00316">
    <property type="entry name" value="S1"/>
    <property type="match status" value="1"/>
</dbReference>
<dbReference type="SUPFAM" id="SSF50249">
    <property type="entry name" value="Nucleic acid-binding proteins"/>
    <property type="match status" value="1"/>
</dbReference>
<dbReference type="PROSITE" id="PS50832">
    <property type="entry name" value="S1_IF1_TYPE"/>
    <property type="match status" value="1"/>
</dbReference>
<keyword id="KW-0150">Chloroplast</keyword>
<keyword id="KW-0396">Initiation factor</keyword>
<keyword id="KW-0934">Plastid</keyword>
<keyword id="KW-0648">Protein biosynthesis</keyword>
<keyword id="KW-0691">RNA editing</keyword>
<keyword id="KW-0694">RNA-binding</keyword>
<keyword id="KW-0699">rRNA-binding</keyword>
<gene>
    <name evidence="1" type="primary">infA</name>
</gene>